<proteinExistence type="inferred from homology"/>
<sequence>MTLNLSVLTPNRIVWDSEVEEIVLSTNSGQIGILPNHAPIATAVDIGILRIRLNDQWLTMALMGGFARIGNNEITVLVNDAEKGSDINPQEAQQTLEIAEANVKKAEGRRQKIEANLALRRARTRVEASNPIS</sequence>
<geneLocation type="chloroplast"/>
<protein>
    <recommendedName>
        <fullName evidence="1">ATP synthase epsilon chain, chloroplastic</fullName>
    </recommendedName>
    <alternativeName>
        <fullName evidence="1">ATP synthase F1 sector epsilon subunit</fullName>
    </alternativeName>
    <alternativeName>
        <fullName evidence="1">F-ATPase epsilon subunit</fullName>
    </alternativeName>
</protein>
<keyword id="KW-0066">ATP synthesis</keyword>
<keyword id="KW-0139">CF(1)</keyword>
<keyword id="KW-0150">Chloroplast</keyword>
<keyword id="KW-0375">Hydrogen ion transport</keyword>
<keyword id="KW-0406">Ion transport</keyword>
<keyword id="KW-0472">Membrane</keyword>
<keyword id="KW-0934">Plastid</keyword>
<keyword id="KW-1185">Reference proteome</keyword>
<keyword id="KW-0793">Thylakoid</keyword>
<keyword id="KW-0813">Transport</keyword>
<organism>
    <name type="scientific">Solanum lycopersicum</name>
    <name type="common">Tomato</name>
    <name type="synonym">Lycopersicon esculentum</name>
    <dbReference type="NCBI Taxonomy" id="4081"/>
    <lineage>
        <taxon>Eukaryota</taxon>
        <taxon>Viridiplantae</taxon>
        <taxon>Streptophyta</taxon>
        <taxon>Embryophyta</taxon>
        <taxon>Tracheophyta</taxon>
        <taxon>Spermatophyta</taxon>
        <taxon>Magnoliopsida</taxon>
        <taxon>eudicotyledons</taxon>
        <taxon>Gunneridae</taxon>
        <taxon>Pentapetalae</taxon>
        <taxon>asterids</taxon>
        <taxon>lamiids</taxon>
        <taxon>Solanales</taxon>
        <taxon>Solanaceae</taxon>
        <taxon>Solanoideae</taxon>
        <taxon>Solaneae</taxon>
        <taxon>Solanum</taxon>
        <taxon>Solanum subgen. Lycopersicon</taxon>
    </lineage>
</organism>
<dbReference type="EMBL" id="DQ347959">
    <property type="protein sequence ID" value="ABC56306.1"/>
    <property type="molecule type" value="Genomic_DNA"/>
</dbReference>
<dbReference type="EMBL" id="AM087200">
    <property type="protein sequence ID" value="CAJ32399.1"/>
    <property type="molecule type" value="Genomic_DNA"/>
</dbReference>
<dbReference type="RefSeq" id="AP_004934.1">
    <property type="nucleotide sequence ID" value="AC_000188.1"/>
</dbReference>
<dbReference type="RefSeq" id="YP_008563094.1">
    <property type="nucleotide sequence ID" value="NC_007898.3"/>
</dbReference>
<dbReference type="SMR" id="Q2MI94"/>
<dbReference type="FunCoup" id="Q2MI94">
    <property type="interactions" value="316"/>
</dbReference>
<dbReference type="STRING" id="4081.Q2MI94"/>
<dbReference type="GeneID" id="3950391"/>
<dbReference type="KEGG" id="sly:3950391"/>
<dbReference type="InParanoid" id="Q2MI94"/>
<dbReference type="OrthoDB" id="423436at2759"/>
<dbReference type="Proteomes" id="UP000004994">
    <property type="component" value="Chloroplast"/>
</dbReference>
<dbReference type="ExpressionAtlas" id="Q2MI94">
    <property type="expression patterns" value="baseline"/>
</dbReference>
<dbReference type="GO" id="GO:0009535">
    <property type="term" value="C:chloroplast thylakoid membrane"/>
    <property type="evidence" value="ECO:0007669"/>
    <property type="project" value="UniProtKB-SubCell"/>
</dbReference>
<dbReference type="GO" id="GO:0045259">
    <property type="term" value="C:proton-transporting ATP synthase complex"/>
    <property type="evidence" value="ECO:0007669"/>
    <property type="project" value="UniProtKB-KW"/>
</dbReference>
<dbReference type="GO" id="GO:0005524">
    <property type="term" value="F:ATP binding"/>
    <property type="evidence" value="ECO:0007669"/>
    <property type="project" value="UniProtKB-UniRule"/>
</dbReference>
<dbReference type="GO" id="GO:0046933">
    <property type="term" value="F:proton-transporting ATP synthase activity, rotational mechanism"/>
    <property type="evidence" value="ECO:0007669"/>
    <property type="project" value="UniProtKB-UniRule"/>
</dbReference>
<dbReference type="GO" id="GO:0015986">
    <property type="term" value="P:proton motive force-driven ATP synthesis"/>
    <property type="evidence" value="ECO:0000318"/>
    <property type="project" value="GO_Central"/>
</dbReference>
<dbReference type="CDD" id="cd12152">
    <property type="entry name" value="F1-ATPase_delta"/>
    <property type="match status" value="1"/>
</dbReference>
<dbReference type="FunFam" id="2.60.15.10:FF:000002">
    <property type="entry name" value="ATP synthase epsilon chain, chloroplastic"/>
    <property type="match status" value="1"/>
</dbReference>
<dbReference type="Gene3D" id="6.10.140.480">
    <property type="match status" value="1"/>
</dbReference>
<dbReference type="Gene3D" id="2.60.15.10">
    <property type="entry name" value="F0F1 ATP synthase delta/epsilon subunit, N-terminal"/>
    <property type="match status" value="1"/>
</dbReference>
<dbReference type="HAMAP" id="MF_00530">
    <property type="entry name" value="ATP_synth_epsil_bac"/>
    <property type="match status" value="1"/>
</dbReference>
<dbReference type="InterPro" id="IPR001469">
    <property type="entry name" value="ATP_synth_F1_dsu/esu"/>
</dbReference>
<dbReference type="InterPro" id="IPR020546">
    <property type="entry name" value="ATP_synth_F1_dsu/esu_N"/>
</dbReference>
<dbReference type="InterPro" id="IPR020547">
    <property type="entry name" value="ATP_synth_F1_esu_C"/>
</dbReference>
<dbReference type="InterPro" id="IPR036771">
    <property type="entry name" value="ATPsynth_dsu/esu_N"/>
</dbReference>
<dbReference type="NCBIfam" id="TIGR01216">
    <property type="entry name" value="ATP_synt_epsi"/>
    <property type="match status" value="1"/>
</dbReference>
<dbReference type="PANTHER" id="PTHR13822">
    <property type="entry name" value="ATP SYNTHASE DELTA/EPSILON CHAIN"/>
    <property type="match status" value="1"/>
</dbReference>
<dbReference type="PANTHER" id="PTHR13822:SF10">
    <property type="entry name" value="ATP SYNTHASE EPSILON CHAIN, CHLOROPLASTIC"/>
    <property type="match status" value="1"/>
</dbReference>
<dbReference type="Pfam" id="PF00401">
    <property type="entry name" value="ATP-synt_DE"/>
    <property type="match status" value="1"/>
</dbReference>
<dbReference type="Pfam" id="PF02823">
    <property type="entry name" value="ATP-synt_DE_N"/>
    <property type="match status" value="1"/>
</dbReference>
<dbReference type="SUPFAM" id="SSF51344">
    <property type="entry name" value="Epsilon subunit of F1F0-ATP synthase N-terminal domain"/>
    <property type="match status" value="1"/>
</dbReference>
<reference key="1">
    <citation type="journal article" date="2006" name="Theor. Appl. Genet.">
        <title>Complete chloroplast genome sequences of Solanum bulbocastanum, Solanum lycopersicum and comparative analyses with other Solanaceae genomes.</title>
        <authorList>
            <person name="Daniell H."/>
            <person name="Lee S.-B."/>
            <person name="Grevich J."/>
            <person name="Saski C."/>
            <person name="Quesada-Vargas T."/>
            <person name="Guda C."/>
            <person name="Tomkins J."/>
            <person name="Jansen R.K."/>
        </authorList>
    </citation>
    <scope>NUCLEOTIDE SEQUENCE [LARGE SCALE GENOMIC DNA]</scope>
    <source>
        <strain>cv. LA3023</strain>
    </source>
</reference>
<reference key="2">
    <citation type="journal article" date="2006" name="J. Mol. Evol.">
        <title>Sequence of the tomato chloroplast DNA and evolutionary comparison of solanaceous plastid genomes.</title>
        <authorList>
            <person name="Kahlau S."/>
            <person name="Aspinall S."/>
            <person name="Gray J.C."/>
            <person name="Bock R."/>
        </authorList>
    </citation>
    <scope>NUCLEOTIDE SEQUENCE [LARGE SCALE GENOMIC DNA]</scope>
    <source>
        <strain>cv. IPA-6</strain>
    </source>
</reference>
<accession>Q2MI94</accession>
<feature type="chain" id="PRO_0000275218" description="ATP synthase epsilon chain, chloroplastic">
    <location>
        <begin position="1"/>
        <end position="133"/>
    </location>
</feature>
<name>ATPE_SOLLC</name>
<evidence type="ECO:0000255" key="1">
    <source>
        <dbReference type="HAMAP-Rule" id="MF_00530"/>
    </source>
</evidence>
<comment type="function">
    <text evidence="1">Produces ATP from ADP in the presence of a proton gradient across the membrane.</text>
</comment>
<comment type="subunit">
    <text evidence="1">F-type ATPases have 2 components, CF(1) - the catalytic core - and CF(0) - the membrane proton channel. CF(1) has five subunits: alpha(3), beta(3), gamma(1), delta(1), epsilon(1). CF(0) has three main subunits: a, b and c.</text>
</comment>
<comment type="subcellular location">
    <subcellularLocation>
        <location evidence="1">Plastid</location>
        <location evidence="1">Chloroplast thylakoid membrane</location>
        <topology evidence="1">Peripheral membrane protein</topology>
    </subcellularLocation>
</comment>
<comment type="similarity">
    <text evidence="1">Belongs to the ATPase epsilon chain family.</text>
</comment>
<gene>
    <name evidence="1" type="primary">atpE</name>
</gene>